<reference key="1">
    <citation type="journal article" date="1998" name="Mol. Biol. Evol.">
        <title>Mitochondrial gene order is not conserved in arthropods: prostriate and metastriate tick mitochondrial genomes.</title>
        <authorList>
            <person name="Black W.C. IV"/>
            <person name="Roehrdanz R.L."/>
        </authorList>
    </citation>
    <scope>NUCLEOTIDE SEQUENCE [GENOMIC DNA]</scope>
</reference>
<accession>O99827</accession>
<comment type="function">
    <text evidence="1">Core subunit of the mitochondrial membrane respiratory chain NADH dehydrogenase (Complex I) that is believed to belong to the minimal assembly required for catalysis. Complex I functions in the transfer of electrons from NADH to the respiratory chain. The immediate electron acceptor for the enzyme is believed to be ubiquinone (By similarity).</text>
</comment>
<comment type="catalytic activity">
    <reaction>
        <text>a ubiquinone + NADH + 5 H(+)(in) = a ubiquinol + NAD(+) + 4 H(+)(out)</text>
        <dbReference type="Rhea" id="RHEA:29091"/>
        <dbReference type="Rhea" id="RHEA-COMP:9565"/>
        <dbReference type="Rhea" id="RHEA-COMP:9566"/>
        <dbReference type="ChEBI" id="CHEBI:15378"/>
        <dbReference type="ChEBI" id="CHEBI:16389"/>
        <dbReference type="ChEBI" id="CHEBI:17976"/>
        <dbReference type="ChEBI" id="CHEBI:57540"/>
        <dbReference type="ChEBI" id="CHEBI:57945"/>
        <dbReference type="EC" id="7.1.1.2"/>
    </reaction>
</comment>
<comment type="subcellular location">
    <subcellularLocation>
        <location evidence="3">Mitochondrion membrane</location>
        <topology evidence="3">Multi-pass membrane protein</topology>
    </subcellularLocation>
</comment>
<comment type="similarity">
    <text evidence="3">Belongs to the complex I subunit 6 family.</text>
</comment>
<organism>
    <name type="scientific">Rhipicephalus sanguineus</name>
    <name type="common">Brown dog tick</name>
    <name type="synonym">Ixodes sanguineus</name>
    <dbReference type="NCBI Taxonomy" id="34632"/>
    <lineage>
        <taxon>Eukaryota</taxon>
        <taxon>Metazoa</taxon>
        <taxon>Ecdysozoa</taxon>
        <taxon>Arthropoda</taxon>
        <taxon>Chelicerata</taxon>
        <taxon>Arachnida</taxon>
        <taxon>Acari</taxon>
        <taxon>Parasitiformes</taxon>
        <taxon>Ixodida</taxon>
        <taxon>Ixodoidea</taxon>
        <taxon>Ixodidae</taxon>
        <taxon>Rhipicephalinae</taxon>
        <taxon>Rhipicephalus</taxon>
        <taxon>Rhipicephalus</taxon>
    </lineage>
</organism>
<proteinExistence type="inferred from homology"/>
<feature type="chain" id="PRO_0000118328" description="NADH-ubiquinone oxidoreductase chain 6">
    <location>
        <begin position="1"/>
        <end position="149"/>
    </location>
</feature>
<feature type="transmembrane region" description="Helical" evidence="2">
    <location>
        <begin position="23"/>
        <end position="43"/>
    </location>
</feature>
<feature type="transmembrane region" description="Helical" evidence="2">
    <location>
        <begin position="51"/>
        <end position="71"/>
    </location>
</feature>
<feature type="transmembrane region" description="Helical" evidence="2">
    <location>
        <begin position="83"/>
        <end position="103"/>
    </location>
</feature>
<feature type="transmembrane region" description="Helical" evidence="2">
    <location>
        <begin position="114"/>
        <end position="134"/>
    </location>
</feature>
<geneLocation type="mitochondrion"/>
<gene>
    <name type="primary">ND6</name>
</gene>
<keyword id="KW-0249">Electron transport</keyword>
<keyword id="KW-0472">Membrane</keyword>
<keyword id="KW-0496">Mitochondrion</keyword>
<keyword id="KW-0520">NAD</keyword>
<keyword id="KW-0679">Respiratory chain</keyword>
<keyword id="KW-1278">Translocase</keyword>
<keyword id="KW-0812">Transmembrane</keyword>
<keyword id="KW-1133">Transmembrane helix</keyword>
<keyword id="KW-0813">Transport</keyword>
<keyword id="KW-0830">Ubiquinone</keyword>
<evidence type="ECO:0000250" key="1"/>
<evidence type="ECO:0000255" key="2"/>
<evidence type="ECO:0000305" key="3"/>
<protein>
    <recommendedName>
        <fullName>NADH-ubiquinone oxidoreductase chain 6</fullName>
        <ecNumber>7.1.1.2</ecNumber>
    </recommendedName>
    <alternativeName>
        <fullName>NADH dehydrogenase subunit 6</fullName>
    </alternativeName>
</protein>
<name>NU6M_RHISA</name>
<dbReference type="EC" id="7.1.1.2"/>
<dbReference type="EMBL" id="AF081829">
    <property type="protein sequence ID" value="AAD05528.1"/>
    <property type="molecule type" value="Genomic_DNA"/>
</dbReference>
<dbReference type="PIR" id="T11164">
    <property type="entry name" value="T11164"/>
</dbReference>
<dbReference type="RefSeq" id="NP_008521.1">
    <property type="nucleotide sequence ID" value="NC_002074.1"/>
</dbReference>
<dbReference type="GeneID" id="808365"/>
<dbReference type="KEGG" id="rsan:808365"/>
<dbReference type="CTD" id="4541"/>
<dbReference type="OrthoDB" id="10532836at2759"/>
<dbReference type="GO" id="GO:0031966">
    <property type="term" value="C:mitochondrial membrane"/>
    <property type="evidence" value="ECO:0007669"/>
    <property type="project" value="UniProtKB-SubCell"/>
</dbReference>
<dbReference type="GO" id="GO:0008137">
    <property type="term" value="F:NADH dehydrogenase (ubiquinone) activity"/>
    <property type="evidence" value="ECO:0007669"/>
    <property type="project" value="UniProtKB-EC"/>
</dbReference>
<sequence>MLFSEIKFLIFMSVICLSSSHPILMLSSLILLTLFLSLIFYFIYQFSIMSMMMILIILGGMLIIFMYMISLCPNKKMSFYKKLSVTFTMMLILIPYDSFMTKLEMININKIYSVNFVNMIILMMIFLIVMLTIISKNLSWINAPIQKFN</sequence>